<sequence>MVHFTAEEKATIMSLWGKVNVEEAGGEALGRLLVVYPWTQRFFDNFGNLSSASAIMGNPKVKAHGKKVLTSFGDAVKNMDNLKGAFAKLSELHCDKLHVDPENFRLLGNVMVIILATHFGKEFTPDVQAAWQKLVSGVATALAHKYH</sequence>
<feature type="chain" id="PRO_0000053207" description="Hemoglobin subunit epsilon">
    <location>
        <begin position="1"/>
        <end position="147"/>
    </location>
</feature>
<feature type="domain" description="Globin" evidence="2">
    <location>
        <begin position="3"/>
        <end position="147"/>
    </location>
</feature>
<feature type="binding site" description="distal binding residue" evidence="2">
    <location>
        <position position="64"/>
    </location>
    <ligand>
        <name>heme b</name>
        <dbReference type="ChEBI" id="CHEBI:60344"/>
    </ligand>
    <ligandPart>
        <name>Fe</name>
        <dbReference type="ChEBI" id="CHEBI:18248"/>
    </ligandPart>
</feature>
<feature type="binding site" description="proximal binding residue" evidence="2">
    <location>
        <position position="93"/>
    </location>
    <ligand>
        <name>heme b</name>
        <dbReference type="ChEBI" id="CHEBI:60344"/>
    </ligand>
    <ligandPart>
        <name>Fe</name>
        <dbReference type="ChEBI" id="CHEBI:18248"/>
    </ligandPart>
</feature>
<feature type="modified residue" description="Phosphoserine" evidence="1">
    <location>
        <position position="14"/>
    </location>
</feature>
<feature type="modified residue" description="Phosphoserine" evidence="1">
    <location>
        <position position="51"/>
    </location>
</feature>
<gene>
    <name type="primary">HBE1</name>
</gene>
<proteinExistence type="evidence at transcript level"/>
<keyword id="KW-0349">Heme</keyword>
<keyword id="KW-0408">Iron</keyword>
<keyword id="KW-0479">Metal-binding</keyword>
<keyword id="KW-0561">Oxygen transport</keyword>
<keyword id="KW-0597">Phosphoprotein</keyword>
<keyword id="KW-0813">Transport</keyword>
<comment type="function">
    <text>The epsilon chain is a beta-type chain of early mammalian embryonic hemoglobin.</text>
</comment>
<comment type="subunit">
    <text>Heterotetramer of two alpha chains and two epsilon chains in early embryonic hemoglobin Gower-2; two zeta chains and two epsilon chains in early embryonic hemoglobin Gower-1.</text>
</comment>
<comment type="tissue specificity">
    <text>Red blood cells.</text>
</comment>
<comment type="similarity">
    <text evidence="2">Belongs to the globin family.</text>
</comment>
<name>HBE_DAUMA</name>
<accession>Q28356</accession>
<organism>
    <name type="scientific">Daubentonia madagascariensis</name>
    <name type="common">Aye-aye</name>
    <name type="synonym">Sciurus madagascariensis</name>
    <dbReference type="NCBI Taxonomy" id="31869"/>
    <lineage>
        <taxon>Eukaryota</taxon>
        <taxon>Metazoa</taxon>
        <taxon>Chordata</taxon>
        <taxon>Craniata</taxon>
        <taxon>Vertebrata</taxon>
        <taxon>Euteleostomi</taxon>
        <taxon>Mammalia</taxon>
        <taxon>Eutheria</taxon>
        <taxon>Euarchontoglires</taxon>
        <taxon>Primates</taxon>
        <taxon>Strepsirrhini</taxon>
        <taxon>Chiromyiformes</taxon>
        <taxon>Daubentoniidae</taxon>
        <taxon>Daubentonia</taxon>
    </lineage>
</organism>
<evidence type="ECO:0000250" key="1">
    <source>
        <dbReference type="UniProtKB" id="P02100"/>
    </source>
</evidence>
<evidence type="ECO:0000255" key="2">
    <source>
        <dbReference type="PROSITE-ProRule" id="PRU00238"/>
    </source>
</evidence>
<protein>
    <recommendedName>
        <fullName>Hemoglobin subunit epsilon</fullName>
    </recommendedName>
    <alternativeName>
        <fullName>Epsilon-globin</fullName>
    </alternativeName>
    <alternativeName>
        <fullName>Hemoglobin epsilon chain</fullName>
    </alternativeName>
</protein>
<dbReference type="EMBL" id="U11712">
    <property type="protein sequence ID" value="AAA80179.1"/>
    <property type="molecule type" value="Genomic_DNA"/>
</dbReference>
<dbReference type="PIR" id="I37020">
    <property type="entry name" value="I37020"/>
</dbReference>
<dbReference type="SMR" id="Q28356"/>
<dbReference type="OrthoDB" id="9886081at2759"/>
<dbReference type="GO" id="GO:0072562">
    <property type="term" value="C:blood microparticle"/>
    <property type="evidence" value="ECO:0007669"/>
    <property type="project" value="TreeGrafter"/>
</dbReference>
<dbReference type="GO" id="GO:0031838">
    <property type="term" value="C:haptoglobin-hemoglobin complex"/>
    <property type="evidence" value="ECO:0007669"/>
    <property type="project" value="TreeGrafter"/>
</dbReference>
<dbReference type="GO" id="GO:0005833">
    <property type="term" value="C:hemoglobin complex"/>
    <property type="evidence" value="ECO:0007669"/>
    <property type="project" value="InterPro"/>
</dbReference>
<dbReference type="GO" id="GO:0031720">
    <property type="term" value="F:haptoglobin binding"/>
    <property type="evidence" value="ECO:0007669"/>
    <property type="project" value="TreeGrafter"/>
</dbReference>
<dbReference type="GO" id="GO:0020037">
    <property type="term" value="F:heme binding"/>
    <property type="evidence" value="ECO:0007669"/>
    <property type="project" value="InterPro"/>
</dbReference>
<dbReference type="GO" id="GO:0031721">
    <property type="term" value="F:hemoglobin alpha binding"/>
    <property type="evidence" value="ECO:0007669"/>
    <property type="project" value="TreeGrafter"/>
</dbReference>
<dbReference type="GO" id="GO:0046872">
    <property type="term" value="F:metal ion binding"/>
    <property type="evidence" value="ECO:0007669"/>
    <property type="project" value="UniProtKB-KW"/>
</dbReference>
<dbReference type="GO" id="GO:0043177">
    <property type="term" value="F:organic acid binding"/>
    <property type="evidence" value="ECO:0007669"/>
    <property type="project" value="TreeGrafter"/>
</dbReference>
<dbReference type="GO" id="GO:0019825">
    <property type="term" value="F:oxygen binding"/>
    <property type="evidence" value="ECO:0007669"/>
    <property type="project" value="InterPro"/>
</dbReference>
<dbReference type="GO" id="GO:0005344">
    <property type="term" value="F:oxygen carrier activity"/>
    <property type="evidence" value="ECO:0007669"/>
    <property type="project" value="UniProtKB-KW"/>
</dbReference>
<dbReference type="GO" id="GO:0004601">
    <property type="term" value="F:peroxidase activity"/>
    <property type="evidence" value="ECO:0007669"/>
    <property type="project" value="TreeGrafter"/>
</dbReference>
<dbReference type="GO" id="GO:0042744">
    <property type="term" value="P:hydrogen peroxide catabolic process"/>
    <property type="evidence" value="ECO:0007669"/>
    <property type="project" value="TreeGrafter"/>
</dbReference>
<dbReference type="CDD" id="cd08925">
    <property type="entry name" value="Hb-beta-like"/>
    <property type="match status" value="1"/>
</dbReference>
<dbReference type="FunFam" id="1.10.490.10:FF:000001">
    <property type="entry name" value="Hemoglobin subunit beta"/>
    <property type="match status" value="1"/>
</dbReference>
<dbReference type="Gene3D" id="1.10.490.10">
    <property type="entry name" value="Globins"/>
    <property type="match status" value="1"/>
</dbReference>
<dbReference type="InterPro" id="IPR000971">
    <property type="entry name" value="Globin"/>
</dbReference>
<dbReference type="InterPro" id="IPR009050">
    <property type="entry name" value="Globin-like_sf"/>
</dbReference>
<dbReference type="InterPro" id="IPR012292">
    <property type="entry name" value="Globin/Proto"/>
</dbReference>
<dbReference type="InterPro" id="IPR002337">
    <property type="entry name" value="Hemoglobin_b"/>
</dbReference>
<dbReference type="InterPro" id="IPR050056">
    <property type="entry name" value="Hemoglobin_oxygen_transport"/>
</dbReference>
<dbReference type="PANTHER" id="PTHR11442">
    <property type="entry name" value="HEMOGLOBIN FAMILY MEMBER"/>
    <property type="match status" value="1"/>
</dbReference>
<dbReference type="PANTHER" id="PTHR11442:SF7">
    <property type="entry name" value="HEMOGLOBIN SUBUNIT EPSILON"/>
    <property type="match status" value="1"/>
</dbReference>
<dbReference type="Pfam" id="PF00042">
    <property type="entry name" value="Globin"/>
    <property type="match status" value="1"/>
</dbReference>
<dbReference type="PRINTS" id="PR00814">
    <property type="entry name" value="BETAHAEM"/>
</dbReference>
<dbReference type="SUPFAM" id="SSF46458">
    <property type="entry name" value="Globin-like"/>
    <property type="match status" value="1"/>
</dbReference>
<dbReference type="PROSITE" id="PS01033">
    <property type="entry name" value="GLOBIN"/>
    <property type="match status" value="1"/>
</dbReference>
<reference key="1">
    <citation type="journal article" date="1995" name="J. Mol. Evol.">
        <title>Evidence on primate phylogeny from epsilon-globin gene sequences and flanking regions.</title>
        <authorList>
            <person name="Porter C.A."/>
            <person name="Sampaio I."/>
            <person name="Schneider H."/>
            <person name="Schneider M.P.C."/>
            <person name="Czelusniak J."/>
            <person name="Goodman M."/>
        </authorList>
    </citation>
    <scope>NUCLEOTIDE SEQUENCE [GENOMIC DNA]</scope>
</reference>